<comment type="miscellaneous">
    <text>Was identified as a high-confidence drug target.</text>
</comment>
<comment type="similarity">
    <text evidence="1">Belongs to the AtsA family.</text>
</comment>
<dbReference type="EMBL" id="AL123456">
    <property type="protein sequence ID" value="CCP44097.1"/>
    <property type="molecule type" value="Genomic_DNA"/>
</dbReference>
<dbReference type="PIR" id="B70739">
    <property type="entry name" value="B70739"/>
</dbReference>
<dbReference type="RefSeq" id="NP_215855.1">
    <property type="nucleotide sequence ID" value="NC_000962.3"/>
</dbReference>
<dbReference type="RefSeq" id="WP_003406922.1">
    <property type="nucleotide sequence ID" value="NC_000962.3"/>
</dbReference>
<dbReference type="SMR" id="P9WGC1"/>
<dbReference type="STRING" id="83332.Rv1339"/>
<dbReference type="PaxDb" id="83332-Rv1339"/>
<dbReference type="DNASU" id="886972"/>
<dbReference type="GeneID" id="886972"/>
<dbReference type="KEGG" id="mtu:Rv1339"/>
<dbReference type="KEGG" id="mtv:RVBD_1339"/>
<dbReference type="PATRIC" id="fig|83332.111.peg.1494"/>
<dbReference type="TubercuList" id="Rv1339"/>
<dbReference type="eggNOG" id="COG1234">
    <property type="taxonomic scope" value="Bacteria"/>
</dbReference>
<dbReference type="InParanoid" id="P9WGC1"/>
<dbReference type="OrthoDB" id="9800940at2"/>
<dbReference type="PhylomeDB" id="P9WGC1"/>
<dbReference type="Proteomes" id="UP000001584">
    <property type="component" value="Chromosome"/>
</dbReference>
<dbReference type="GO" id="GO:0005886">
    <property type="term" value="C:plasma membrane"/>
    <property type="evidence" value="ECO:0007005"/>
    <property type="project" value="MTBBASE"/>
</dbReference>
<dbReference type="GO" id="GO:0042781">
    <property type="term" value="F:3'-tRNA processing endoribonuclease activity"/>
    <property type="evidence" value="ECO:0000318"/>
    <property type="project" value="GO_Central"/>
</dbReference>
<dbReference type="CDD" id="cd07716">
    <property type="entry name" value="RNaseZ_short-form-like_MBL-fold"/>
    <property type="match status" value="1"/>
</dbReference>
<dbReference type="FunFam" id="3.60.15.10:FF:000087">
    <property type="entry name" value="MBL fold metallo-hydrolase"/>
    <property type="match status" value="1"/>
</dbReference>
<dbReference type="Gene3D" id="3.60.15.10">
    <property type="entry name" value="Ribonuclease Z/Hydroxyacylglutathione hydrolase-like"/>
    <property type="match status" value="1"/>
</dbReference>
<dbReference type="InterPro" id="IPR054857">
    <property type="entry name" value="cyc_nuc_deg_phdiest"/>
</dbReference>
<dbReference type="InterPro" id="IPR001279">
    <property type="entry name" value="Metallo-B-lactamas"/>
</dbReference>
<dbReference type="InterPro" id="IPR036866">
    <property type="entry name" value="RibonucZ/Hydroxyglut_hydro"/>
</dbReference>
<dbReference type="NCBIfam" id="NF041851">
    <property type="entry name" value="cyc_nuc_deg_phdiest"/>
    <property type="match status" value="1"/>
</dbReference>
<dbReference type="PANTHER" id="PTHR46018:SF4">
    <property type="entry name" value="METALLO-HYDROLASE YHFI-RELATED"/>
    <property type="match status" value="1"/>
</dbReference>
<dbReference type="PANTHER" id="PTHR46018">
    <property type="entry name" value="ZINC PHOSPHODIESTERASE ELAC PROTEIN 1"/>
    <property type="match status" value="1"/>
</dbReference>
<dbReference type="Pfam" id="PF12706">
    <property type="entry name" value="Lactamase_B_2"/>
    <property type="match status" value="1"/>
</dbReference>
<dbReference type="SUPFAM" id="SSF56281">
    <property type="entry name" value="Metallo-hydrolase/oxidoreductase"/>
    <property type="match status" value="1"/>
</dbReference>
<evidence type="ECO:0000305" key="1"/>
<organism>
    <name type="scientific">Mycobacterium tuberculosis (strain ATCC 25618 / H37Rv)</name>
    <dbReference type="NCBI Taxonomy" id="83332"/>
    <lineage>
        <taxon>Bacteria</taxon>
        <taxon>Bacillati</taxon>
        <taxon>Actinomycetota</taxon>
        <taxon>Actinomycetes</taxon>
        <taxon>Mycobacteriales</taxon>
        <taxon>Mycobacteriaceae</taxon>
        <taxon>Mycobacterium</taxon>
        <taxon>Mycobacterium tuberculosis complex</taxon>
    </lineage>
</organism>
<protein>
    <recommendedName>
        <fullName>Uncharacterized protein Rv1339</fullName>
    </recommendedName>
</protein>
<gene>
    <name type="ordered locus">Rv1339</name>
    <name type="ORF">MTCY02B10.03</name>
    <name type="ORF">MTCY130.24</name>
</gene>
<accession>P9WGC1</accession>
<accession>L0T6K2</accession>
<accession>P66873</accession>
<accession>Q10648</accession>
<name>Y1339_MYCTU</name>
<keyword id="KW-1185">Reference proteome</keyword>
<sequence length="273" mass="29154">MRRCIPHRCIGHGTVVSVRITVLGCSGSVVGPDSPASGYLLRAPHTPPLVIDFGGGVLGALQRHADPASVHVLLSHLHADHCLDLPGLFVWRRYHPSRPSGKALLYGPSDTWSRLGAASSPYGGEIDDCSDIFDVHHWADSEPVTLGALTIVPRLVAHPTESFGLRITDPSGASLAYSGDTGICDQLVELARGVDVFLCEASWTHSPKHPPDLHLSGTEAGMVAAQAGVRELLLTHIPPWTSREDVISEAKAEFDGPVHAVVCDETFEVRRAG</sequence>
<proteinExistence type="evidence at protein level"/>
<feature type="chain" id="PRO_0000192688" description="Uncharacterized protein Rv1339">
    <location>
        <begin position="1"/>
        <end position="273"/>
    </location>
</feature>
<reference key="1">
    <citation type="journal article" date="1998" name="Nature">
        <title>Deciphering the biology of Mycobacterium tuberculosis from the complete genome sequence.</title>
        <authorList>
            <person name="Cole S.T."/>
            <person name="Brosch R."/>
            <person name="Parkhill J."/>
            <person name="Garnier T."/>
            <person name="Churcher C.M."/>
            <person name="Harris D.E."/>
            <person name="Gordon S.V."/>
            <person name="Eiglmeier K."/>
            <person name="Gas S."/>
            <person name="Barry C.E. III"/>
            <person name="Tekaia F."/>
            <person name="Badcock K."/>
            <person name="Basham D."/>
            <person name="Brown D."/>
            <person name="Chillingworth T."/>
            <person name="Connor R."/>
            <person name="Davies R.M."/>
            <person name="Devlin K."/>
            <person name="Feltwell T."/>
            <person name="Gentles S."/>
            <person name="Hamlin N."/>
            <person name="Holroyd S."/>
            <person name="Hornsby T."/>
            <person name="Jagels K."/>
            <person name="Krogh A."/>
            <person name="McLean J."/>
            <person name="Moule S."/>
            <person name="Murphy L.D."/>
            <person name="Oliver S."/>
            <person name="Osborne J."/>
            <person name="Quail M.A."/>
            <person name="Rajandream M.A."/>
            <person name="Rogers J."/>
            <person name="Rutter S."/>
            <person name="Seeger K."/>
            <person name="Skelton S."/>
            <person name="Squares S."/>
            <person name="Squares R."/>
            <person name="Sulston J.E."/>
            <person name="Taylor K."/>
            <person name="Whitehead S."/>
            <person name="Barrell B.G."/>
        </authorList>
    </citation>
    <scope>NUCLEOTIDE SEQUENCE [LARGE SCALE GENOMIC DNA]</scope>
    <source>
        <strain>ATCC 25618 / H37Rv</strain>
    </source>
</reference>
<reference key="2">
    <citation type="journal article" date="2008" name="BMC Syst. Biol.">
        <title>targetTB: a target identification pipeline for Mycobacterium tuberculosis through an interactome, reactome and genome-scale structural analysis.</title>
        <authorList>
            <person name="Raman K."/>
            <person name="Yeturu K."/>
            <person name="Chandra N."/>
        </authorList>
    </citation>
    <scope>IDENTIFICATION AS A DRUG TARGET [LARGE SCALE ANALYSIS]</scope>
</reference>
<reference key="3">
    <citation type="journal article" date="2011" name="Mol. Cell. Proteomics">
        <title>Proteogenomic analysis of Mycobacterium tuberculosis by high resolution mass spectrometry.</title>
        <authorList>
            <person name="Kelkar D.S."/>
            <person name="Kumar D."/>
            <person name="Kumar P."/>
            <person name="Balakrishnan L."/>
            <person name="Muthusamy B."/>
            <person name="Yadav A.K."/>
            <person name="Shrivastava P."/>
            <person name="Marimuthu A."/>
            <person name="Anand S."/>
            <person name="Sundaram H."/>
            <person name="Kingsbury R."/>
            <person name="Harsha H.C."/>
            <person name="Nair B."/>
            <person name="Prasad T.S."/>
            <person name="Chauhan D.S."/>
            <person name="Katoch K."/>
            <person name="Katoch V.M."/>
            <person name="Kumar P."/>
            <person name="Chaerkady R."/>
            <person name="Ramachandran S."/>
            <person name="Dash D."/>
            <person name="Pandey A."/>
        </authorList>
    </citation>
    <scope>IDENTIFICATION BY MASS SPECTROMETRY [LARGE SCALE ANALYSIS]</scope>
    <source>
        <strain>ATCC 25618 / H37Rv</strain>
    </source>
</reference>